<gene>
    <name type="ORF">PGUG_03145</name>
</gene>
<sequence length="426" mass="47767">MCDVVLGAQWGDEGKGKLVDLLCDDIEVCARCAGGNNAGHTIVVGKTKYDFHMLPSGLVNPKCQNILGSGVVVHIPSFFEELENLEKKGLDCRNRLFVSSRAHLVFDFHQRTDKLKEAELSENKKSIGTTGKGIGPTYSTKASRSGIRVHHLVSDDPDAWDEFKTRYYRLVDSRYKRYGEFEYDAEAELERYKKYREVLKPFVVDSVNFMHKAIKDKKRILVEGANALMLDIDFGTYPYVTSSSTGIGGVLTGLGLPPTAIRNVYGVVKAYTTRVGEGPFPTEQLNEVGEKLQDIGAEFGVTTGRKRRCGWLDLVVMKYSTAINGYTSLNITKLDVLDTFKEIKVGVSYTYKGKKLESFPEDLNVLKNVEVDYVTLPGWEQDITGIKKYSDLPENAQKYLKFIEDFLEVPIEWVGTGPARESMLTK</sequence>
<comment type="function">
    <text evidence="1">Plays an important role in the de novo pathway and in the salvage pathway of purine nucleotide biosynthesis. Catalyzes the first committed step in the biosynthesis of AMP from IMP (By similarity).</text>
</comment>
<comment type="catalytic activity">
    <reaction evidence="2">
        <text>IMP + L-aspartate + GTP = N(6)-(1,2-dicarboxyethyl)-AMP + GDP + phosphate + 2 H(+)</text>
        <dbReference type="Rhea" id="RHEA:15753"/>
        <dbReference type="ChEBI" id="CHEBI:15378"/>
        <dbReference type="ChEBI" id="CHEBI:29991"/>
        <dbReference type="ChEBI" id="CHEBI:37565"/>
        <dbReference type="ChEBI" id="CHEBI:43474"/>
        <dbReference type="ChEBI" id="CHEBI:57567"/>
        <dbReference type="ChEBI" id="CHEBI:58053"/>
        <dbReference type="ChEBI" id="CHEBI:58189"/>
        <dbReference type="EC" id="6.3.4.4"/>
    </reaction>
</comment>
<comment type="cofactor">
    <cofactor evidence="2">
        <name>Mg(2+)</name>
        <dbReference type="ChEBI" id="CHEBI:18420"/>
    </cofactor>
    <text evidence="2">Binds 1 Mg(2+) ion per subunit.</text>
</comment>
<comment type="pathway">
    <text evidence="2">Purine metabolism; AMP biosynthesis via de novo pathway; AMP from IMP: step 1/2.</text>
</comment>
<comment type="subunit">
    <text evidence="2">Homodimer.</text>
</comment>
<comment type="subcellular location">
    <subcellularLocation>
        <location evidence="2">Cytoplasm</location>
    </subcellularLocation>
</comment>
<comment type="similarity">
    <text evidence="2">Belongs to the adenylosuccinate synthetase family.</text>
</comment>
<reference key="1">
    <citation type="journal article" date="2009" name="Nature">
        <title>Evolution of pathogenicity and sexual reproduction in eight Candida genomes.</title>
        <authorList>
            <person name="Butler G."/>
            <person name="Rasmussen M.D."/>
            <person name="Lin M.F."/>
            <person name="Santos M.A.S."/>
            <person name="Sakthikumar S."/>
            <person name="Munro C.A."/>
            <person name="Rheinbay E."/>
            <person name="Grabherr M."/>
            <person name="Forche A."/>
            <person name="Reedy J.L."/>
            <person name="Agrafioti I."/>
            <person name="Arnaud M.B."/>
            <person name="Bates S."/>
            <person name="Brown A.J.P."/>
            <person name="Brunke S."/>
            <person name="Costanzo M.C."/>
            <person name="Fitzpatrick D.A."/>
            <person name="de Groot P.W.J."/>
            <person name="Harris D."/>
            <person name="Hoyer L.L."/>
            <person name="Hube B."/>
            <person name="Klis F.M."/>
            <person name="Kodira C."/>
            <person name="Lennard N."/>
            <person name="Logue M.E."/>
            <person name="Martin R."/>
            <person name="Neiman A.M."/>
            <person name="Nikolaou E."/>
            <person name="Quail M.A."/>
            <person name="Quinn J."/>
            <person name="Santos M.C."/>
            <person name="Schmitzberger F.F."/>
            <person name="Sherlock G."/>
            <person name="Shah P."/>
            <person name="Silverstein K.A.T."/>
            <person name="Skrzypek M.S."/>
            <person name="Soll D."/>
            <person name="Staggs R."/>
            <person name="Stansfield I."/>
            <person name="Stumpf M.P.H."/>
            <person name="Sudbery P.E."/>
            <person name="Srikantha T."/>
            <person name="Zeng Q."/>
            <person name="Berman J."/>
            <person name="Berriman M."/>
            <person name="Heitman J."/>
            <person name="Gow N.A.R."/>
            <person name="Lorenz M.C."/>
            <person name="Birren B.W."/>
            <person name="Kellis M."/>
            <person name="Cuomo C.A."/>
        </authorList>
    </citation>
    <scope>NUCLEOTIDE SEQUENCE [LARGE SCALE GENOMIC DNA]</scope>
    <source>
        <strain>ATCC 6260 / CBS 566 / DSM 6381 / JCM 1539 / NBRC 10279 / NRRL Y-324</strain>
    </source>
</reference>
<evidence type="ECO:0000250" key="1"/>
<evidence type="ECO:0000255" key="2">
    <source>
        <dbReference type="HAMAP-Rule" id="MF_03125"/>
    </source>
</evidence>
<name>PURA_PICGU</name>
<proteinExistence type="inferred from homology"/>
<dbReference type="EC" id="6.3.4.4" evidence="2"/>
<dbReference type="EMBL" id="CH408157">
    <property type="protein sequence ID" value="EDK39047.1"/>
    <property type="molecule type" value="Genomic_DNA"/>
</dbReference>
<dbReference type="RefSeq" id="XP_001485416.1">
    <property type="nucleotide sequence ID" value="XM_001485366.1"/>
</dbReference>
<dbReference type="SMR" id="A5DIP4"/>
<dbReference type="FunCoup" id="A5DIP4">
    <property type="interactions" value="796"/>
</dbReference>
<dbReference type="STRING" id="294746.A5DIP4"/>
<dbReference type="GeneID" id="5126927"/>
<dbReference type="KEGG" id="pgu:PGUG_03145"/>
<dbReference type="VEuPathDB" id="FungiDB:PGUG_03145"/>
<dbReference type="eggNOG" id="KOG1355">
    <property type="taxonomic scope" value="Eukaryota"/>
</dbReference>
<dbReference type="HOGENOM" id="CLU_029848_3_0_1"/>
<dbReference type="InParanoid" id="A5DIP4"/>
<dbReference type="OMA" id="FHHAKPI"/>
<dbReference type="OrthoDB" id="10265645at2759"/>
<dbReference type="UniPathway" id="UPA00075">
    <property type="reaction ID" value="UER00335"/>
</dbReference>
<dbReference type="Proteomes" id="UP000001997">
    <property type="component" value="Unassembled WGS sequence"/>
</dbReference>
<dbReference type="GO" id="GO:0005737">
    <property type="term" value="C:cytoplasm"/>
    <property type="evidence" value="ECO:0007669"/>
    <property type="project" value="UniProtKB-SubCell"/>
</dbReference>
<dbReference type="GO" id="GO:0004019">
    <property type="term" value="F:adenylosuccinate synthase activity"/>
    <property type="evidence" value="ECO:0007669"/>
    <property type="project" value="UniProtKB-UniRule"/>
</dbReference>
<dbReference type="GO" id="GO:0005525">
    <property type="term" value="F:GTP binding"/>
    <property type="evidence" value="ECO:0007669"/>
    <property type="project" value="UniProtKB-UniRule"/>
</dbReference>
<dbReference type="GO" id="GO:0000287">
    <property type="term" value="F:magnesium ion binding"/>
    <property type="evidence" value="ECO:0007669"/>
    <property type="project" value="UniProtKB-UniRule"/>
</dbReference>
<dbReference type="GO" id="GO:0044208">
    <property type="term" value="P:'de novo' AMP biosynthetic process"/>
    <property type="evidence" value="ECO:0007669"/>
    <property type="project" value="UniProtKB-UniRule"/>
</dbReference>
<dbReference type="GO" id="GO:0046040">
    <property type="term" value="P:IMP metabolic process"/>
    <property type="evidence" value="ECO:0007669"/>
    <property type="project" value="TreeGrafter"/>
</dbReference>
<dbReference type="CDD" id="cd03108">
    <property type="entry name" value="AdSS"/>
    <property type="match status" value="1"/>
</dbReference>
<dbReference type="FunFam" id="3.90.170.10:FF:000001">
    <property type="entry name" value="Adenylosuccinate synthetase"/>
    <property type="match status" value="1"/>
</dbReference>
<dbReference type="FunFam" id="1.10.300.10:FF:000002">
    <property type="entry name" value="Adenylosuccinate synthetase, chloroplastic"/>
    <property type="match status" value="1"/>
</dbReference>
<dbReference type="Gene3D" id="3.40.440.10">
    <property type="entry name" value="Adenylosuccinate Synthetase, subunit A, domain 1"/>
    <property type="match status" value="1"/>
</dbReference>
<dbReference type="Gene3D" id="1.10.300.10">
    <property type="entry name" value="Adenylosuccinate Synthetase, subunit A, domain 2"/>
    <property type="match status" value="1"/>
</dbReference>
<dbReference type="Gene3D" id="3.90.170.10">
    <property type="entry name" value="Adenylosuccinate Synthetase, subunit A, domain 3"/>
    <property type="match status" value="1"/>
</dbReference>
<dbReference type="HAMAP" id="MF_00011">
    <property type="entry name" value="Adenylosucc_synth"/>
    <property type="match status" value="1"/>
</dbReference>
<dbReference type="InterPro" id="IPR018220">
    <property type="entry name" value="Adenylosuccin_syn_GTP-bd"/>
</dbReference>
<dbReference type="InterPro" id="IPR033128">
    <property type="entry name" value="Adenylosuccin_syn_Lys_AS"/>
</dbReference>
<dbReference type="InterPro" id="IPR042109">
    <property type="entry name" value="Adenylosuccinate_synth_dom1"/>
</dbReference>
<dbReference type="InterPro" id="IPR042110">
    <property type="entry name" value="Adenylosuccinate_synth_dom2"/>
</dbReference>
<dbReference type="InterPro" id="IPR042111">
    <property type="entry name" value="Adenylosuccinate_synth_dom3"/>
</dbReference>
<dbReference type="InterPro" id="IPR001114">
    <property type="entry name" value="Adenylosuccinate_synthetase"/>
</dbReference>
<dbReference type="InterPro" id="IPR027417">
    <property type="entry name" value="P-loop_NTPase"/>
</dbReference>
<dbReference type="NCBIfam" id="NF002223">
    <property type="entry name" value="PRK01117.1"/>
    <property type="match status" value="1"/>
</dbReference>
<dbReference type="NCBIfam" id="TIGR00184">
    <property type="entry name" value="purA"/>
    <property type="match status" value="1"/>
</dbReference>
<dbReference type="PANTHER" id="PTHR11846">
    <property type="entry name" value="ADENYLOSUCCINATE SYNTHETASE"/>
    <property type="match status" value="1"/>
</dbReference>
<dbReference type="PANTHER" id="PTHR11846:SF0">
    <property type="entry name" value="ADENYLOSUCCINATE SYNTHETASE"/>
    <property type="match status" value="1"/>
</dbReference>
<dbReference type="Pfam" id="PF00709">
    <property type="entry name" value="Adenylsucc_synt"/>
    <property type="match status" value="1"/>
</dbReference>
<dbReference type="SMART" id="SM00788">
    <property type="entry name" value="Adenylsucc_synt"/>
    <property type="match status" value="1"/>
</dbReference>
<dbReference type="SUPFAM" id="SSF52540">
    <property type="entry name" value="P-loop containing nucleoside triphosphate hydrolases"/>
    <property type="match status" value="1"/>
</dbReference>
<dbReference type="PROSITE" id="PS01266">
    <property type="entry name" value="ADENYLOSUCCIN_SYN_1"/>
    <property type="match status" value="1"/>
</dbReference>
<dbReference type="PROSITE" id="PS00513">
    <property type="entry name" value="ADENYLOSUCCIN_SYN_2"/>
    <property type="match status" value="1"/>
</dbReference>
<accession>A5DIP4</accession>
<protein>
    <recommendedName>
        <fullName evidence="2">Adenylosuccinate synthetase</fullName>
        <shortName evidence="2">AMPSase</shortName>
        <shortName evidence="2">AdSS</shortName>
        <ecNumber evidence="2">6.3.4.4</ecNumber>
    </recommendedName>
    <alternativeName>
        <fullName evidence="2">IMP--aspartate ligase</fullName>
    </alternativeName>
</protein>
<organism>
    <name type="scientific">Meyerozyma guilliermondii (strain ATCC 6260 / CBS 566 / DSM 6381 / JCM 1539 / NBRC 10279 / NRRL Y-324)</name>
    <name type="common">Yeast</name>
    <name type="synonym">Candida guilliermondii</name>
    <dbReference type="NCBI Taxonomy" id="294746"/>
    <lineage>
        <taxon>Eukaryota</taxon>
        <taxon>Fungi</taxon>
        <taxon>Dikarya</taxon>
        <taxon>Ascomycota</taxon>
        <taxon>Saccharomycotina</taxon>
        <taxon>Pichiomycetes</taxon>
        <taxon>Debaryomycetaceae</taxon>
        <taxon>Meyerozyma</taxon>
    </lineage>
</organism>
<feature type="chain" id="PRO_0000399354" description="Adenylosuccinate synthetase">
    <location>
        <begin position="1"/>
        <end position="426"/>
    </location>
</feature>
<feature type="active site" description="Proton acceptor" evidence="2">
    <location>
        <position position="12"/>
    </location>
</feature>
<feature type="active site" description="Proton donor" evidence="2">
    <location>
        <position position="40"/>
    </location>
</feature>
<feature type="binding site" evidence="2">
    <location>
        <begin position="11"/>
        <end position="17"/>
    </location>
    <ligand>
        <name>GTP</name>
        <dbReference type="ChEBI" id="CHEBI:37565"/>
    </ligand>
</feature>
<feature type="binding site" description="in other chain" evidence="2">
    <location>
        <begin position="12"/>
        <end position="15"/>
    </location>
    <ligand>
        <name>IMP</name>
        <dbReference type="ChEBI" id="CHEBI:58053"/>
        <note>ligand shared between dimeric partners</note>
    </ligand>
</feature>
<feature type="binding site" evidence="2">
    <location>
        <position position="12"/>
    </location>
    <ligand>
        <name>Mg(2+)</name>
        <dbReference type="ChEBI" id="CHEBI:18420"/>
    </ligand>
</feature>
<feature type="binding site" description="in other chain" evidence="2">
    <location>
        <begin position="37"/>
        <end position="40"/>
    </location>
    <ligand>
        <name>IMP</name>
        <dbReference type="ChEBI" id="CHEBI:58053"/>
        <note>ligand shared between dimeric partners</note>
    </ligand>
</feature>
<feature type="binding site" evidence="2">
    <location>
        <begin position="39"/>
        <end position="41"/>
    </location>
    <ligand>
        <name>GTP</name>
        <dbReference type="ChEBI" id="CHEBI:37565"/>
    </ligand>
</feature>
<feature type="binding site" evidence="2">
    <location>
        <position position="39"/>
    </location>
    <ligand>
        <name>Mg(2+)</name>
        <dbReference type="ChEBI" id="CHEBI:18420"/>
    </ligand>
</feature>
<feature type="binding site" description="in other chain" evidence="2">
    <location>
        <position position="130"/>
    </location>
    <ligand>
        <name>IMP</name>
        <dbReference type="ChEBI" id="CHEBI:58053"/>
        <note>ligand shared between dimeric partners</note>
    </ligand>
</feature>
<feature type="binding site" evidence="2">
    <location>
        <position position="144"/>
    </location>
    <ligand>
        <name>IMP</name>
        <dbReference type="ChEBI" id="CHEBI:58053"/>
        <note>ligand shared between dimeric partners</note>
    </ligand>
</feature>
<feature type="binding site" description="in other chain" evidence="2">
    <location>
        <position position="226"/>
    </location>
    <ligand>
        <name>IMP</name>
        <dbReference type="ChEBI" id="CHEBI:58053"/>
        <note>ligand shared between dimeric partners</note>
    </ligand>
</feature>
<feature type="binding site" description="in other chain" evidence="2">
    <location>
        <position position="241"/>
    </location>
    <ligand>
        <name>IMP</name>
        <dbReference type="ChEBI" id="CHEBI:58053"/>
        <note>ligand shared between dimeric partners</note>
    </ligand>
</feature>
<feature type="binding site" evidence="2">
    <location>
        <begin position="301"/>
        <end position="307"/>
    </location>
    <ligand>
        <name>substrate</name>
    </ligand>
</feature>
<feature type="binding site" description="in other chain" evidence="2">
    <location>
        <position position="305"/>
    </location>
    <ligand>
        <name>IMP</name>
        <dbReference type="ChEBI" id="CHEBI:58053"/>
        <note>ligand shared between dimeric partners</note>
    </ligand>
</feature>
<feature type="binding site" evidence="2">
    <location>
        <position position="307"/>
    </location>
    <ligand>
        <name>GTP</name>
        <dbReference type="ChEBI" id="CHEBI:37565"/>
    </ligand>
</feature>
<feature type="binding site" evidence="2">
    <location>
        <begin position="333"/>
        <end position="335"/>
    </location>
    <ligand>
        <name>GTP</name>
        <dbReference type="ChEBI" id="CHEBI:37565"/>
    </ligand>
</feature>
<feature type="binding site" evidence="2">
    <location>
        <begin position="415"/>
        <end position="417"/>
    </location>
    <ligand>
        <name>GTP</name>
        <dbReference type="ChEBI" id="CHEBI:37565"/>
    </ligand>
</feature>
<keyword id="KW-0963">Cytoplasm</keyword>
<keyword id="KW-0342">GTP-binding</keyword>
<keyword id="KW-0436">Ligase</keyword>
<keyword id="KW-0460">Magnesium</keyword>
<keyword id="KW-0479">Metal-binding</keyword>
<keyword id="KW-0547">Nucleotide-binding</keyword>
<keyword id="KW-0658">Purine biosynthesis</keyword>
<keyword id="KW-1185">Reference proteome</keyword>